<dbReference type="EC" id="3.6.5.2" evidence="3"/>
<dbReference type="EMBL" id="BC114066">
    <property type="protein sequence ID" value="AAI14067.1"/>
    <property type="molecule type" value="mRNA"/>
</dbReference>
<dbReference type="RefSeq" id="NP_001039674.1">
    <property type="nucleotide sequence ID" value="NM_001046209.1"/>
</dbReference>
<dbReference type="SMR" id="Q29RR0"/>
<dbReference type="FunCoup" id="Q29RR0">
    <property type="interactions" value="765"/>
</dbReference>
<dbReference type="STRING" id="9913.ENSBTAP00000000348"/>
<dbReference type="PaxDb" id="9913-ENSBTAP00000000348"/>
<dbReference type="Ensembl" id="ENSBTAT00000000348.4">
    <property type="protein sequence ID" value="ENSBTAP00000000348.3"/>
    <property type="gene ID" value="ENSBTAG00000000279.5"/>
</dbReference>
<dbReference type="GeneID" id="515675"/>
<dbReference type="KEGG" id="bta:515675"/>
<dbReference type="CTD" id="25837"/>
<dbReference type="VEuPathDB" id="HostDB:ENSBTAG00000000279"/>
<dbReference type="VGNC" id="VGNC:33633">
    <property type="gene designation" value="RAB26"/>
</dbReference>
<dbReference type="eggNOG" id="KOG0083">
    <property type="taxonomic scope" value="Eukaryota"/>
</dbReference>
<dbReference type="GeneTree" id="ENSGT00940000158558"/>
<dbReference type="HOGENOM" id="CLU_041217_10_1_1"/>
<dbReference type="InParanoid" id="Q29RR0"/>
<dbReference type="OMA" id="QRSMKVP"/>
<dbReference type="OrthoDB" id="9989112at2759"/>
<dbReference type="TreeFam" id="TF323428"/>
<dbReference type="Proteomes" id="UP000009136">
    <property type="component" value="Chromosome 25"/>
</dbReference>
<dbReference type="Bgee" id="ENSBTAG00000000279">
    <property type="expression patterns" value="Expressed in adenohypophysis and 102 other cell types or tissues"/>
</dbReference>
<dbReference type="GO" id="GO:0031985">
    <property type="term" value="C:Golgi cisterna"/>
    <property type="evidence" value="ECO:0000318"/>
    <property type="project" value="GO_Central"/>
</dbReference>
<dbReference type="GO" id="GO:0000139">
    <property type="term" value="C:Golgi membrane"/>
    <property type="evidence" value="ECO:0007669"/>
    <property type="project" value="Ensembl"/>
</dbReference>
<dbReference type="GO" id="GO:0005886">
    <property type="term" value="C:plasma membrane"/>
    <property type="evidence" value="ECO:0000250"/>
    <property type="project" value="UniProtKB"/>
</dbReference>
<dbReference type="GO" id="GO:0030667">
    <property type="term" value="C:secretory granule membrane"/>
    <property type="evidence" value="ECO:0007669"/>
    <property type="project" value="Ensembl"/>
</dbReference>
<dbReference type="GO" id="GO:0030672">
    <property type="term" value="C:synaptic vesicle membrane"/>
    <property type="evidence" value="ECO:0007669"/>
    <property type="project" value="Ensembl"/>
</dbReference>
<dbReference type="GO" id="GO:0005802">
    <property type="term" value="C:trans-Golgi network"/>
    <property type="evidence" value="ECO:0000318"/>
    <property type="project" value="GO_Central"/>
</dbReference>
<dbReference type="GO" id="GO:0019002">
    <property type="term" value="F:GMP binding"/>
    <property type="evidence" value="ECO:0007669"/>
    <property type="project" value="Ensembl"/>
</dbReference>
<dbReference type="GO" id="GO:0005525">
    <property type="term" value="F:GTP binding"/>
    <property type="evidence" value="ECO:0000250"/>
    <property type="project" value="UniProtKB"/>
</dbReference>
<dbReference type="GO" id="GO:0003924">
    <property type="term" value="F:GTPase activity"/>
    <property type="evidence" value="ECO:0000318"/>
    <property type="project" value="GO_Central"/>
</dbReference>
<dbReference type="GO" id="GO:0035272">
    <property type="term" value="P:exocrine system development"/>
    <property type="evidence" value="ECO:0000250"/>
    <property type="project" value="UniProtKB"/>
</dbReference>
<dbReference type="GO" id="GO:0043001">
    <property type="term" value="P:Golgi to plasma membrane protein transport"/>
    <property type="evidence" value="ECO:0007669"/>
    <property type="project" value="Ensembl"/>
</dbReference>
<dbReference type="GO" id="GO:0045055">
    <property type="term" value="P:regulated exocytosis"/>
    <property type="evidence" value="ECO:0007669"/>
    <property type="project" value="Ensembl"/>
</dbReference>
<dbReference type="GO" id="GO:0017157">
    <property type="term" value="P:regulation of exocytosis"/>
    <property type="evidence" value="ECO:0000250"/>
    <property type="project" value="UniProtKB"/>
</dbReference>
<dbReference type="GO" id="GO:0140251">
    <property type="term" value="P:regulation protein catabolic process at presynapse"/>
    <property type="evidence" value="ECO:0007669"/>
    <property type="project" value="Ensembl"/>
</dbReference>
<dbReference type="GO" id="GO:0016192">
    <property type="term" value="P:vesicle-mediated transport"/>
    <property type="evidence" value="ECO:0000318"/>
    <property type="project" value="GO_Central"/>
</dbReference>
<dbReference type="CDD" id="cd04112">
    <property type="entry name" value="Rab26"/>
    <property type="match status" value="1"/>
</dbReference>
<dbReference type="FunFam" id="3.40.50.300:FF:000459">
    <property type="entry name" value="ras-related protein Rab-37 isoform X1"/>
    <property type="match status" value="1"/>
</dbReference>
<dbReference type="Gene3D" id="3.40.50.300">
    <property type="entry name" value="P-loop containing nucleotide triphosphate hydrolases"/>
    <property type="match status" value="1"/>
</dbReference>
<dbReference type="InterPro" id="IPR027417">
    <property type="entry name" value="P-loop_NTPase"/>
</dbReference>
<dbReference type="InterPro" id="IPR005225">
    <property type="entry name" value="Small_GTP-bd"/>
</dbReference>
<dbReference type="InterPro" id="IPR001806">
    <property type="entry name" value="Small_GTPase"/>
</dbReference>
<dbReference type="InterPro" id="IPR050305">
    <property type="entry name" value="Small_GTPase_Rab"/>
</dbReference>
<dbReference type="NCBIfam" id="TIGR00231">
    <property type="entry name" value="small_GTP"/>
    <property type="match status" value="1"/>
</dbReference>
<dbReference type="PANTHER" id="PTHR47980">
    <property type="entry name" value="LD44762P"/>
    <property type="match status" value="1"/>
</dbReference>
<dbReference type="Pfam" id="PF00071">
    <property type="entry name" value="Ras"/>
    <property type="match status" value="1"/>
</dbReference>
<dbReference type="PRINTS" id="PR00449">
    <property type="entry name" value="RASTRNSFRMNG"/>
</dbReference>
<dbReference type="SMART" id="SM00177">
    <property type="entry name" value="ARF"/>
    <property type="match status" value="1"/>
</dbReference>
<dbReference type="SMART" id="SM00175">
    <property type="entry name" value="RAB"/>
    <property type="match status" value="1"/>
</dbReference>
<dbReference type="SMART" id="SM00176">
    <property type="entry name" value="RAN"/>
    <property type="match status" value="1"/>
</dbReference>
<dbReference type="SMART" id="SM00173">
    <property type="entry name" value="RAS"/>
    <property type="match status" value="1"/>
</dbReference>
<dbReference type="SMART" id="SM00174">
    <property type="entry name" value="RHO"/>
    <property type="match status" value="1"/>
</dbReference>
<dbReference type="SUPFAM" id="SSF52540">
    <property type="entry name" value="P-loop containing nucleoside triphosphate hydrolases"/>
    <property type="match status" value="1"/>
</dbReference>
<dbReference type="PROSITE" id="PS51419">
    <property type="entry name" value="RAB"/>
    <property type="match status" value="1"/>
</dbReference>
<accession>Q29RR0</accession>
<feature type="chain" id="PRO_0000239696" description="Ras-related protein Rab-26">
    <location>
        <begin position="1"/>
        <end position="256"/>
    </location>
</feature>
<feature type="region of interest" description="Disordered" evidence="6">
    <location>
        <begin position="1"/>
        <end position="53"/>
    </location>
</feature>
<feature type="short sequence motif" description="Switch 1" evidence="4">
    <location>
        <begin position="86"/>
        <end position="101"/>
    </location>
</feature>
<feature type="short sequence motif" description="Switch 2" evidence="4">
    <location>
        <begin position="119"/>
        <end position="136"/>
    </location>
</feature>
<feature type="compositionally biased region" description="Pro residues" evidence="6">
    <location>
        <begin position="38"/>
        <end position="48"/>
    </location>
</feature>
<feature type="binding site" evidence="5">
    <location>
        <position position="72"/>
    </location>
    <ligand>
        <name>GTP</name>
        <dbReference type="ChEBI" id="CHEBI:37565"/>
    </ligand>
</feature>
<feature type="binding site" evidence="3">
    <location>
        <position position="73"/>
    </location>
    <ligand>
        <name>GTP</name>
        <dbReference type="ChEBI" id="CHEBI:37565"/>
    </ligand>
</feature>
<feature type="binding site" evidence="3">
    <location>
        <position position="74"/>
    </location>
    <ligand>
        <name>GTP</name>
        <dbReference type="ChEBI" id="CHEBI:37565"/>
    </ligand>
</feature>
<feature type="binding site" evidence="5">
    <location>
        <position position="75"/>
    </location>
    <ligand>
        <name>GTP</name>
        <dbReference type="ChEBI" id="CHEBI:37565"/>
    </ligand>
</feature>
<feature type="binding site" evidence="5">
    <location>
        <position position="76"/>
    </location>
    <ligand>
        <name>GTP</name>
        <dbReference type="ChEBI" id="CHEBI:37565"/>
    </ligand>
</feature>
<feature type="binding site" evidence="5">
    <location>
        <position position="77"/>
    </location>
    <ligand>
        <name>GTP</name>
        <dbReference type="ChEBI" id="CHEBI:37565"/>
    </ligand>
</feature>
<feature type="binding site" evidence="5">
    <location>
        <position position="77"/>
    </location>
    <ligand>
        <name>Mg(2+)</name>
        <dbReference type="ChEBI" id="CHEBI:18420"/>
    </ligand>
</feature>
<feature type="binding site" evidence="5">
    <location>
        <position position="78"/>
    </location>
    <ligand>
        <name>GTP</name>
        <dbReference type="ChEBI" id="CHEBI:37565"/>
    </ligand>
</feature>
<feature type="binding site" evidence="3">
    <location>
        <position position="95"/>
    </location>
    <ligand>
        <name>GTP</name>
        <dbReference type="ChEBI" id="CHEBI:37565"/>
    </ligand>
</feature>
<feature type="binding site" evidence="5">
    <location>
        <position position="96"/>
    </location>
    <ligand>
        <name>GTP</name>
        <dbReference type="ChEBI" id="CHEBI:37565"/>
    </ligand>
</feature>
<feature type="binding site" evidence="5">
    <location>
        <position position="96"/>
    </location>
    <ligand>
        <name>Mg(2+)</name>
        <dbReference type="ChEBI" id="CHEBI:18420"/>
    </ligand>
</feature>
<feature type="binding site" evidence="3">
    <location>
        <position position="119"/>
    </location>
    <ligand>
        <name>Mg(2+)</name>
        <dbReference type="ChEBI" id="CHEBI:18420"/>
    </ligand>
</feature>
<feature type="binding site" evidence="5">
    <location>
        <position position="122"/>
    </location>
    <ligand>
        <name>GTP</name>
        <dbReference type="ChEBI" id="CHEBI:37565"/>
    </ligand>
</feature>
<feature type="binding site" evidence="5">
    <location>
        <position position="177"/>
    </location>
    <ligand>
        <name>GTP</name>
        <dbReference type="ChEBI" id="CHEBI:37565"/>
    </ligand>
</feature>
<feature type="binding site" evidence="5">
    <location>
        <position position="178"/>
    </location>
    <ligand>
        <name>GTP</name>
        <dbReference type="ChEBI" id="CHEBI:37565"/>
    </ligand>
</feature>
<feature type="binding site" evidence="5">
    <location>
        <position position="180"/>
    </location>
    <ligand>
        <name>GTP</name>
        <dbReference type="ChEBI" id="CHEBI:37565"/>
    </ligand>
</feature>
<feature type="binding site" evidence="5">
    <location>
        <position position="208"/>
    </location>
    <ligand>
        <name>GTP</name>
        <dbReference type="ChEBI" id="CHEBI:37565"/>
    </ligand>
</feature>
<feature type="binding site" evidence="5">
    <location>
        <position position="209"/>
    </location>
    <ligand>
        <name>GTP</name>
        <dbReference type="ChEBI" id="CHEBI:37565"/>
    </ligand>
</feature>
<feature type="lipid moiety-binding region" description="S-geranylgeranyl cysteine" evidence="1">
    <location>
        <position position="253"/>
    </location>
</feature>
<feature type="lipid moiety-binding region" description="S-geranylgeranyl cysteine" evidence="1">
    <location>
        <position position="254"/>
    </location>
</feature>
<sequence length="256" mass="27802">MSRKKTPKSKAGSAPATSALPAANGPRPVRPGTARPGPEAPPNGPPQPGRSSVGGGGDFYDVAFKVMLVGDSGVGKTCLLVRFKDGAFLAGTFISTVGIDFRNKVVDVDGMKVKLQIWDTAGQERFRSVTHAYYRDAHALLLLYDVTNKASFDSIQAWLTEIQEHAQDDVVLMLLGNKVDSAQERAVKREDAEKLAKDYGLPFMETSAKTGLNVDLAFTAIAKELKQRHTKAPSEPRFQLHDYIKREGRGASCCRP</sequence>
<gene>
    <name type="primary">RAB26</name>
</gene>
<name>RAB26_BOVIN</name>
<evidence type="ECO:0000250" key="1"/>
<evidence type="ECO:0000250" key="2">
    <source>
        <dbReference type="UniProtKB" id="P51156"/>
    </source>
</evidence>
<evidence type="ECO:0000250" key="3">
    <source>
        <dbReference type="UniProtKB" id="P61006"/>
    </source>
</evidence>
<evidence type="ECO:0000250" key="4">
    <source>
        <dbReference type="UniProtKB" id="P62820"/>
    </source>
</evidence>
<evidence type="ECO:0000250" key="5">
    <source>
        <dbReference type="UniProtKB" id="Q9ULW5"/>
    </source>
</evidence>
<evidence type="ECO:0000256" key="6">
    <source>
        <dbReference type="SAM" id="MobiDB-lite"/>
    </source>
</evidence>
<evidence type="ECO:0000305" key="7"/>
<protein>
    <recommendedName>
        <fullName>Ras-related protein Rab-26</fullName>
        <ecNumber evidence="3">3.6.5.2</ecNumber>
    </recommendedName>
</protein>
<organism>
    <name type="scientific">Bos taurus</name>
    <name type="common">Bovine</name>
    <dbReference type="NCBI Taxonomy" id="9913"/>
    <lineage>
        <taxon>Eukaryota</taxon>
        <taxon>Metazoa</taxon>
        <taxon>Chordata</taxon>
        <taxon>Craniata</taxon>
        <taxon>Vertebrata</taxon>
        <taxon>Euteleostomi</taxon>
        <taxon>Mammalia</taxon>
        <taxon>Eutheria</taxon>
        <taxon>Laurasiatheria</taxon>
        <taxon>Artiodactyla</taxon>
        <taxon>Ruminantia</taxon>
        <taxon>Pecora</taxon>
        <taxon>Bovidae</taxon>
        <taxon>Bovinae</taxon>
        <taxon>Bos</taxon>
    </lineage>
</organism>
<proteinExistence type="evidence at transcript level"/>
<reference key="1">
    <citation type="submission" date="2006-02" db="EMBL/GenBank/DDBJ databases">
        <authorList>
            <consortium name="NIH - Mammalian Gene Collection (MGC) project"/>
        </authorList>
    </citation>
    <scope>NUCLEOTIDE SEQUENCE [LARGE SCALE MRNA]</scope>
    <source>
        <strain>Hereford</strain>
        <tissue>Hypothalamus</tissue>
    </source>
</reference>
<comment type="function">
    <text evidence="2 3 5">The small GTPases Rab are key regulators of intracellular membrane trafficking, from the formation of transport vesicles to their fusion with membranes. Rabs cycle between an inactive GDP-bound form and an active GTP-bound form that is able to recruit to membranes different set of downstream effectors directly responsible for vesicle formation, movement, tethering and fusion (By similarity). RAB26 mediates transport of ADRA2A and ADRA2B from the Golgi to the cell membrane. Plays a role in the maturation of zymogenic granules and in pepsinogen secretion in the stomach (By similarity). Plays a role in the secretion of amylase from acinar granules in the parotid gland (By similarity).</text>
</comment>
<comment type="catalytic activity">
    <reaction evidence="3">
        <text>GTP + H2O = GDP + phosphate + H(+)</text>
        <dbReference type="Rhea" id="RHEA:19669"/>
        <dbReference type="ChEBI" id="CHEBI:15377"/>
        <dbReference type="ChEBI" id="CHEBI:15378"/>
        <dbReference type="ChEBI" id="CHEBI:37565"/>
        <dbReference type="ChEBI" id="CHEBI:43474"/>
        <dbReference type="ChEBI" id="CHEBI:58189"/>
        <dbReference type="EC" id="3.6.5.2"/>
    </reaction>
    <physiologicalReaction direction="left-to-right" evidence="3">
        <dbReference type="Rhea" id="RHEA:19670"/>
    </physiologicalReaction>
</comment>
<comment type="cofactor">
    <cofactor evidence="5">
        <name>Mg(2+)</name>
        <dbReference type="ChEBI" id="CHEBI:18420"/>
    </cofactor>
</comment>
<comment type="activity regulation">
    <text evidence="7">Regulated by guanine nucleotide exchange factors (GEFs) which promote the exchange of bound GDP for free GTP. Regulated by GTPase activating proteins (GAPs) which increase the GTP hydrolysis activity. Inhibited by GDP dissociation inhibitors (GDIs).</text>
</comment>
<comment type="subcellular location">
    <subcellularLocation>
        <location evidence="1">Cell membrane</location>
        <topology evidence="1">Lipid-anchor</topology>
        <orientation evidence="1">Cytoplasmic side</orientation>
    </subcellularLocation>
</comment>
<comment type="domain">
    <text evidence="4">Switch 1, switch 2 and the interswitch regions are characteristic of Rab GTPases and mediate the interactions with Rab downstream effectors. The switch regions undergo conformational changes upon nucleotide binding which drive interaction with specific sets of effector proteins, with most effectors only binding to GTP-bound Rab.</text>
</comment>
<comment type="similarity">
    <text evidence="7">Belongs to the small GTPase superfamily. Rab family.</text>
</comment>
<keyword id="KW-1003">Cell membrane</keyword>
<keyword id="KW-0342">GTP-binding</keyword>
<keyword id="KW-0378">Hydrolase</keyword>
<keyword id="KW-0449">Lipoprotein</keyword>
<keyword id="KW-0460">Magnesium</keyword>
<keyword id="KW-0472">Membrane</keyword>
<keyword id="KW-0479">Metal-binding</keyword>
<keyword id="KW-0547">Nucleotide-binding</keyword>
<keyword id="KW-0636">Prenylation</keyword>
<keyword id="KW-0653">Protein transport</keyword>
<keyword id="KW-1185">Reference proteome</keyword>
<keyword id="KW-0813">Transport</keyword>